<feature type="chain" id="PRO_0000181236" description="Suppressor of cytokine signaling 1">
    <location>
        <begin position="1"/>
        <end position="212"/>
    </location>
</feature>
<feature type="domain" description="SH2" evidence="2">
    <location>
        <begin position="80"/>
        <end position="175"/>
    </location>
</feature>
<feature type="domain" description="SOCS box" evidence="3">
    <location>
        <begin position="162"/>
        <end position="211"/>
    </location>
</feature>
<feature type="region of interest" description="Disordered" evidence="4">
    <location>
        <begin position="1"/>
        <end position="55"/>
    </location>
</feature>
<feature type="region of interest" description="Kinase inhibitory region (KIR)">
    <location>
        <begin position="56"/>
        <end position="67"/>
    </location>
</feature>
<feature type="region of interest" description="Extended SH2 subdomain (ESS)">
    <location>
        <begin position="68"/>
        <end position="79"/>
    </location>
</feature>
<feature type="region of interest" description="Interaction with Elongin BC complex">
    <location>
        <begin position="174"/>
        <end position="183"/>
    </location>
</feature>
<feature type="compositionally biased region" description="Low complexity" evidence="4">
    <location>
        <begin position="25"/>
        <end position="36"/>
    </location>
</feature>
<feature type="compositionally biased region" description="Pro residues" evidence="4">
    <location>
        <begin position="37"/>
        <end position="50"/>
    </location>
</feature>
<feature type="mutagenesis site" description="No effect on LIF signal transduction suppression.">
    <original>P</original>
    <variation>A</variation>
    <location>
        <position position="51"/>
    </location>
</feature>
<feature type="mutagenesis site" description="No effect on LIF signal transduction suppression.">
    <original>G</original>
    <variation>A</variation>
    <location>
        <position position="52"/>
    </location>
</feature>
<feature type="mutagenesis site" description="No effect on LIF signal transduction suppression.">
    <original>D</original>
    <variation>A</variation>
    <variation>R</variation>
    <location>
        <position position="53"/>
    </location>
</feature>
<feature type="mutagenesis site" description="No effect on LIF signal transduction suppression.">
    <original>T</original>
    <variation>A</variation>
    <location>
        <position position="54"/>
    </location>
</feature>
<feature type="mutagenesis site" description="No effect on JAK signal transduction suppression." evidence="6">
    <original>H</original>
    <variation>A</variation>
    <variation>D</variation>
    <location>
        <position position="55"/>
    </location>
</feature>
<feature type="mutagenesis site" description="Loss of JAK signal transduction suppression." evidence="6">
    <original>F</original>
    <variation>A</variation>
    <variation>S</variation>
    <variation>D</variation>
    <location>
        <position position="56"/>
    </location>
</feature>
<feature type="mutagenesis site" description="Reduced binding to JH1." evidence="6">
    <original>F</original>
    <variation>E</variation>
    <variation>S</variation>
    <location>
        <position position="56"/>
    </location>
</feature>
<feature type="mutagenesis site" description="No effect on JAK signal transduction inhibition nor on binding to JH1." evidence="6">
    <original>F</original>
    <variation>L</variation>
    <location>
        <position position="56"/>
    </location>
</feature>
<feature type="mutagenesis site" description="No effect on JAK signal transduction suppression." evidence="6">
    <original>R</original>
    <variation>A</variation>
    <variation>E</variation>
    <location>
        <position position="57"/>
    </location>
</feature>
<feature type="mutagenesis site" description="No effect on JAK signal transduction suppression." evidence="6">
    <original>T</original>
    <variation>A</variation>
    <location>
        <position position="58"/>
    </location>
</feature>
<feature type="mutagenesis site" description="Loss of JAK signal transduction suppression. Reduced binding to JH1." evidence="6 7">
    <original>F</original>
    <variation>A</variation>
    <variation>E</variation>
    <location>
        <position position="59"/>
    </location>
</feature>
<feature type="mutagenesis site" description="Loss of JAK signal transduction suppression. Destabilization of SOCS1." evidence="6 7">
    <original>F</original>
    <variation>D</variation>
    <location>
        <position position="59"/>
    </location>
</feature>
<feature type="mutagenesis site" description="No effect on JAK signal transduction suppression nor on binding to JH1." evidence="6 7">
    <original>F</original>
    <variation>L</variation>
    <location>
        <position position="59"/>
    </location>
</feature>
<feature type="mutagenesis site" description="No effect on LIF signal transduction suppression." evidence="6">
    <original>R</original>
    <variation>A</variation>
    <location>
        <position position="60"/>
    </location>
</feature>
<feature type="mutagenesis site" description="No effect on JAK signal transduction suppression." evidence="6">
    <original>S</original>
    <variation>E</variation>
    <location>
        <position position="61"/>
    </location>
</feature>
<feature type="mutagenesis site" description="No effect on JAK signal transduction suppression." evidence="6">
    <original>H</original>
    <variation>E</variation>
    <location>
        <position position="62"/>
    </location>
</feature>
<feature type="mutagenesis site" description="Loss of JAK signal transduction suppression. Reduced binding to JH1." evidence="6">
    <original>D</original>
    <variation>R</variation>
    <location>
        <position position="64"/>
    </location>
</feature>
<feature type="mutagenesis site" description="Some loss of JAK signal transduction signaling. Reduced binding to JH1." evidence="6">
    <original>Y</original>
    <variation>A</variation>
    <location>
        <position position="65"/>
    </location>
</feature>
<feature type="mutagenesis site" description="Loss of binding to JH1/Y-1007 of JAK2 and loss of signal transduction suppression.">
    <original>I</original>
    <variation>E</variation>
    <location>
        <position position="68"/>
    </location>
</feature>
<feature type="mutagenesis site" description="No effect on LIF signal transduction suppression.">
    <original>R</original>
    <variation>E</variation>
    <location>
        <position position="70"/>
    </location>
</feature>
<feature type="mutagenesis site" description="Loss of binding to JH1/Y-1007 of JAK2 and loss of signal transduction suppression.">
    <original>L</original>
    <variation>E</variation>
    <location>
        <position position="75"/>
    </location>
</feature>
<feature type="mutagenesis site" description="Loss of LIF signal transduction suppression. Loss of binding to KIT. No effect on binding to VAV." evidence="6">
    <original>R</original>
    <variation>K</variation>
    <location>
        <position position="105"/>
    </location>
</feature>
<feature type="mutagenesis site" description="Loss of IL-6 signal transduction suppression. No effect on binding to TYK2." evidence="6">
    <original>R</original>
    <variation>Q</variation>
    <location>
        <position position="105"/>
    </location>
</feature>
<feature type="mutagenesis site" description="Abolishes interaction with elongin BC complex; when associated with F-179." evidence="15">
    <original>L</original>
    <variation>P</variation>
    <location>
        <position position="175"/>
    </location>
</feature>
<feature type="mutagenesis site" description="Abolishes interaction with elongin BC complex; when associated with P-175." evidence="15">
    <original>C</original>
    <variation>F</variation>
    <location>
        <position position="179"/>
    </location>
</feature>
<feature type="sequence conflict" description="In Ref. 2; BAA21538 and 3; BAA21539." evidence="17" ref="2 3">
    <original>S</original>
    <variation>N</variation>
    <location>
        <position position="141"/>
    </location>
</feature>
<evidence type="ECO:0000250" key="1">
    <source>
        <dbReference type="UniProtKB" id="O15524"/>
    </source>
</evidence>
<evidence type="ECO:0000255" key="2">
    <source>
        <dbReference type="PROSITE-ProRule" id="PRU00191"/>
    </source>
</evidence>
<evidence type="ECO:0000255" key="3">
    <source>
        <dbReference type="PROSITE-ProRule" id="PRU00194"/>
    </source>
</evidence>
<evidence type="ECO:0000256" key="4">
    <source>
        <dbReference type="SAM" id="MobiDB-lite"/>
    </source>
</evidence>
<evidence type="ECO:0000269" key="5">
    <source>
    </source>
</evidence>
<evidence type="ECO:0000269" key="6">
    <source>
    </source>
</evidence>
<evidence type="ECO:0000269" key="7">
    <source>
    </source>
</evidence>
<evidence type="ECO:0000269" key="8">
    <source>
    </source>
</evidence>
<evidence type="ECO:0000269" key="9">
    <source>
    </source>
</evidence>
<evidence type="ECO:0000269" key="10">
    <source>
    </source>
</evidence>
<evidence type="ECO:0000269" key="11">
    <source>
    </source>
</evidence>
<evidence type="ECO:0000269" key="12">
    <source>
    </source>
</evidence>
<evidence type="ECO:0000269" key="13">
    <source>
    </source>
</evidence>
<evidence type="ECO:0000269" key="14">
    <source>
    </source>
</evidence>
<evidence type="ECO:0000269" key="15">
    <source>
    </source>
</evidence>
<evidence type="ECO:0000303" key="16">
    <source>
    </source>
</evidence>
<evidence type="ECO:0000305" key="17"/>
<evidence type="ECO:0000312" key="18">
    <source>
        <dbReference type="MGI" id="MGI:1354910"/>
    </source>
</evidence>
<protein>
    <recommendedName>
        <fullName evidence="17">Suppressor of cytokine signaling 1</fullName>
        <shortName evidence="17">SOCS-1</shortName>
    </recommendedName>
    <alternativeName>
        <fullName>JAK-binding protein</fullName>
        <shortName>JAB</shortName>
    </alternativeName>
    <alternativeName>
        <fullName evidence="16">STAT-induced STAT inhibitor 1</fullName>
        <shortName evidence="16">SSI-1</shortName>
    </alternativeName>
</protein>
<sequence>MVARNQVAADNAISPAAEPRRRSEPSSSSSSSSPAAPVRPRPCPAVPAPAPGDTHFRTFRSHSDYRRITRTSALLDACGFYWGPLSVHGAHERLRAEPVGTFLVRDSRQRNCFFALSVKMASGPTSIRVHFQAGRFHLDGSRETFDCLFELLEHYVAAPRRMLGAPLRQRRVRPLQELCRQRIVAAVGRENLARIPLNPVLRDYLSSFPFQI</sequence>
<proteinExistence type="evidence at protein level"/>
<accession>O35716</accession>
<accession>A2RT46</accession>
<accession>O35960</accession>
<accession>Q3U3L0</accession>
<keyword id="KW-0968">Cytoplasmic vesicle</keyword>
<keyword id="KW-0341">Growth regulation</keyword>
<keyword id="KW-0539">Nucleus</keyword>
<keyword id="KW-1185">Reference proteome</keyword>
<keyword id="KW-0727">SH2 domain</keyword>
<keyword id="KW-0734">Signal transduction inhibitor</keyword>
<keyword id="KW-0833">Ubl conjugation pathway</keyword>
<gene>
    <name evidence="18" type="primary">Socs1</name>
    <name type="synonym">Cish1</name>
    <name evidence="16" type="synonym">Ssi1</name>
</gene>
<organism>
    <name type="scientific">Mus musculus</name>
    <name type="common">Mouse</name>
    <dbReference type="NCBI Taxonomy" id="10090"/>
    <lineage>
        <taxon>Eukaryota</taxon>
        <taxon>Metazoa</taxon>
        <taxon>Chordata</taxon>
        <taxon>Craniata</taxon>
        <taxon>Vertebrata</taxon>
        <taxon>Euteleostomi</taxon>
        <taxon>Mammalia</taxon>
        <taxon>Eutheria</taxon>
        <taxon>Euarchontoglires</taxon>
        <taxon>Glires</taxon>
        <taxon>Rodentia</taxon>
        <taxon>Myomorpha</taxon>
        <taxon>Muroidea</taxon>
        <taxon>Muridae</taxon>
        <taxon>Murinae</taxon>
        <taxon>Mus</taxon>
        <taxon>Mus</taxon>
    </lineage>
</organism>
<name>SOCS1_MOUSE</name>
<dbReference type="EMBL" id="U88325">
    <property type="protein sequence ID" value="AAB62400.1"/>
    <property type="molecule type" value="mRNA"/>
</dbReference>
<dbReference type="EMBL" id="AB000677">
    <property type="protein sequence ID" value="BAA21538.1"/>
    <property type="molecule type" value="mRNA"/>
</dbReference>
<dbReference type="EMBL" id="AB000710">
    <property type="protein sequence ID" value="BAA21539.1"/>
    <property type="molecule type" value="mRNA"/>
</dbReference>
<dbReference type="EMBL" id="AF120490">
    <property type="protein sequence ID" value="AAD24777.1"/>
    <property type="molecule type" value="mRNA"/>
</dbReference>
<dbReference type="EMBL" id="AF180302">
    <property type="protein sequence ID" value="AAD53324.1"/>
    <property type="molecule type" value="mRNA"/>
</dbReference>
<dbReference type="EMBL" id="AK028632">
    <property type="protein sequence ID" value="BAC26040.1"/>
    <property type="molecule type" value="mRNA"/>
</dbReference>
<dbReference type="EMBL" id="AK154706">
    <property type="protein sequence ID" value="BAE32775.1"/>
    <property type="molecule type" value="mRNA"/>
</dbReference>
<dbReference type="EMBL" id="BC132366">
    <property type="protein sequence ID" value="AAI32367.1"/>
    <property type="molecule type" value="mRNA"/>
</dbReference>
<dbReference type="EMBL" id="BC132368">
    <property type="protein sequence ID" value="AAI32369.1"/>
    <property type="molecule type" value="mRNA"/>
</dbReference>
<dbReference type="CCDS" id="CCDS27952.1"/>
<dbReference type="RefSeq" id="NP_001258532.1">
    <property type="nucleotide sequence ID" value="NM_001271603.1"/>
</dbReference>
<dbReference type="RefSeq" id="NP_034026.1">
    <property type="nucleotide sequence ID" value="NM_009896.2"/>
</dbReference>
<dbReference type="SMR" id="O35716"/>
<dbReference type="BioGRID" id="198719">
    <property type="interactions" value="32"/>
</dbReference>
<dbReference type="FunCoup" id="O35716">
    <property type="interactions" value="1445"/>
</dbReference>
<dbReference type="IntAct" id="O35716">
    <property type="interactions" value="6"/>
</dbReference>
<dbReference type="MINT" id="O35716"/>
<dbReference type="STRING" id="10090.ENSMUSP00000155530"/>
<dbReference type="iPTMnet" id="O35716"/>
<dbReference type="PhosphoSitePlus" id="O35716"/>
<dbReference type="PaxDb" id="10090-ENSMUSP00000038121"/>
<dbReference type="ProteomicsDB" id="257284"/>
<dbReference type="Antibodypedia" id="4157">
    <property type="antibodies" value="623 antibodies from 44 providers"/>
</dbReference>
<dbReference type="DNASU" id="12703"/>
<dbReference type="Ensembl" id="ENSMUST00000038099.6">
    <property type="protein sequence ID" value="ENSMUSP00000038121.5"/>
    <property type="gene ID" value="ENSMUSG00000038037.6"/>
</dbReference>
<dbReference type="Ensembl" id="ENSMUST00000229866.2">
    <property type="protein sequence ID" value="ENSMUSP00000155530.2"/>
    <property type="gene ID" value="ENSMUSG00000038037.6"/>
</dbReference>
<dbReference type="GeneID" id="12703"/>
<dbReference type="KEGG" id="mmu:12703"/>
<dbReference type="UCSC" id="uc007yed.1">
    <property type="organism name" value="mouse"/>
</dbReference>
<dbReference type="AGR" id="MGI:1354910"/>
<dbReference type="CTD" id="8651"/>
<dbReference type="MGI" id="MGI:1354910">
    <property type="gene designation" value="Socs1"/>
</dbReference>
<dbReference type="VEuPathDB" id="HostDB:ENSMUSG00000038037"/>
<dbReference type="eggNOG" id="KOG4566">
    <property type="taxonomic scope" value="Eukaryota"/>
</dbReference>
<dbReference type="GeneTree" id="ENSGT00940000161164"/>
<dbReference type="HOGENOM" id="CLU_079452_2_1_1"/>
<dbReference type="InParanoid" id="O35716"/>
<dbReference type="OMA" id="FPTFTCK"/>
<dbReference type="OrthoDB" id="9937362at2759"/>
<dbReference type="PhylomeDB" id="O35716"/>
<dbReference type="TreeFam" id="TF321368"/>
<dbReference type="Reactome" id="R-MMU-6785807">
    <property type="pathway name" value="Interleukin-4 and Interleukin-13 signaling"/>
</dbReference>
<dbReference type="Reactome" id="R-MMU-877300">
    <property type="pathway name" value="Interferon gamma signaling"/>
</dbReference>
<dbReference type="Reactome" id="R-MMU-877312">
    <property type="pathway name" value="Regulation of IFNG signaling"/>
</dbReference>
<dbReference type="Reactome" id="R-MMU-909733">
    <property type="pathway name" value="Interferon alpha/beta signaling"/>
</dbReference>
<dbReference type="Reactome" id="R-MMU-9705462">
    <property type="pathway name" value="Inactivation of CSF3 (G-CSF) signaling"/>
</dbReference>
<dbReference type="Reactome" id="R-MMU-983168">
    <property type="pathway name" value="Antigen processing: Ubiquitination &amp; Proteasome degradation"/>
</dbReference>
<dbReference type="SABIO-RK" id="O35716"/>
<dbReference type="UniPathway" id="UPA00143"/>
<dbReference type="BioGRID-ORCS" id="12703">
    <property type="hits" value="21 hits in 81 CRISPR screens"/>
</dbReference>
<dbReference type="ChiTaRS" id="Socs1">
    <property type="organism name" value="mouse"/>
</dbReference>
<dbReference type="PRO" id="PR:O35716"/>
<dbReference type="Proteomes" id="UP000000589">
    <property type="component" value="Chromosome 16"/>
</dbReference>
<dbReference type="RNAct" id="O35716">
    <property type="molecule type" value="protein"/>
</dbReference>
<dbReference type="Bgee" id="ENSMUSG00000038037">
    <property type="expression patterns" value="Expressed in thymus and 79 other cell types or tissues"/>
</dbReference>
<dbReference type="GO" id="GO:0031410">
    <property type="term" value="C:cytoplasmic vesicle"/>
    <property type="evidence" value="ECO:0007669"/>
    <property type="project" value="UniProtKB-KW"/>
</dbReference>
<dbReference type="GO" id="GO:0005829">
    <property type="term" value="C:cytosol"/>
    <property type="evidence" value="ECO:0000304"/>
    <property type="project" value="Reactome"/>
</dbReference>
<dbReference type="GO" id="GO:0005654">
    <property type="term" value="C:nucleoplasm"/>
    <property type="evidence" value="ECO:0007669"/>
    <property type="project" value="Ensembl"/>
</dbReference>
<dbReference type="GO" id="GO:0005159">
    <property type="term" value="F:insulin-like growth factor receptor binding"/>
    <property type="evidence" value="ECO:0007669"/>
    <property type="project" value="Ensembl"/>
</dbReference>
<dbReference type="GO" id="GO:0019210">
    <property type="term" value="F:kinase inhibitor activity"/>
    <property type="evidence" value="ECO:0000314"/>
    <property type="project" value="MGI"/>
</dbReference>
<dbReference type="GO" id="GO:0019901">
    <property type="term" value="F:protein kinase binding"/>
    <property type="evidence" value="ECO:0007669"/>
    <property type="project" value="Ensembl"/>
</dbReference>
<dbReference type="GO" id="GO:0007259">
    <property type="term" value="P:cell surface receptor signaling pathway via JAK-STAT"/>
    <property type="evidence" value="ECO:0000314"/>
    <property type="project" value="MGI"/>
</dbReference>
<dbReference type="GO" id="GO:0071230">
    <property type="term" value="P:cellular response to amino acid stimulus"/>
    <property type="evidence" value="ECO:0000314"/>
    <property type="project" value="MGI"/>
</dbReference>
<dbReference type="GO" id="GO:0071345">
    <property type="term" value="P:cellular response to cytokine stimulus"/>
    <property type="evidence" value="ECO:0000266"/>
    <property type="project" value="MGI"/>
</dbReference>
<dbReference type="GO" id="GO:0019221">
    <property type="term" value="P:cytokine-mediated signaling pathway"/>
    <property type="evidence" value="ECO:0000314"/>
    <property type="project" value="MGI"/>
</dbReference>
<dbReference type="GO" id="GO:0045444">
    <property type="term" value="P:fat cell differentiation"/>
    <property type="evidence" value="ECO:0000315"/>
    <property type="project" value="MGI"/>
</dbReference>
<dbReference type="GO" id="GO:0035556">
    <property type="term" value="P:intracellular signal transduction"/>
    <property type="evidence" value="ECO:0007669"/>
    <property type="project" value="InterPro"/>
</dbReference>
<dbReference type="GO" id="GO:0030225">
    <property type="term" value="P:macrophage differentiation"/>
    <property type="evidence" value="ECO:0007669"/>
    <property type="project" value="Ensembl"/>
</dbReference>
<dbReference type="GO" id="GO:0043377">
    <property type="term" value="P:negative regulation of CD8-positive, alpha-beta T cell differentiation"/>
    <property type="evidence" value="ECO:0000315"/>
    <property type="project" value="UniProtKB"/>
</dbReference>
<dbReference type="GO" id="GO:0046627">
    <property type="term" value="P:negative regulation of insulin receptor signaling pathway"/>
    <property type="evidence" value="ECO:0000314"/>
    <property type="project" value="MGI"/>
</dbReference>
<dbReference type="GO" id="GO:0046426">
    <property type="term" value="P:negative regulation of receptor signaling pathway via JAK-STAT"/>
    <property type="evidence" value="ECO:0000315"/>
    <property type="project" value="MGI"/>
</dbReference>
<dbReference type="GO" id="GO:0043372">
    <property type="term" value="P:positive regulation of CD4-positive, alpha-beta T cell differentiation"/>
    <property type="evidence" value="ECO:0000315"/>
    <property type="project" value="UniProtKB"/>
</dbReference>
<dbReference type="GO" id="GO:0045591">
    <property type="term" value="P:positive regulation of regulatory T cell differentiation"/>
    <property type="evidence" value="ECO:0007669"/>
    <property type="project" value="Ensembl"/>
</dbReference>
<dbReference type="GO" id="GO:0016567">
    <property type="term" value="P:protein ubiquitination"/>
    <property type="evidence" value="ECO:0007669"/>
    <property type="project" value="UniProtKB-UniPathway"/>
</dbReference>
<dbReference type="GO" id="GO:0001817">
    <property type="term" value="P:regulation of cytokine production"/>
    <property type="evidence" value="ECO:0000315"/>
    <property type="project" value="MGI"/>
</dbReference>
<dbReference type="GO" id="GO:0046425">
    <property type="term" value="P:regulation of receptor signaling pathway via JAK-STAT"/>
    <property type="evidence" value="ECO:0000315"/>
    <property type="project" value="MGI"/>
</dbReference>
<dbReference type="CDD" id="cd10382">
    <property type="entry name" value="SH2_SOCS1"/>
    <property type="match status" value="1"/>
</dbReference>
<dbReference type="FunFam" id="1.10.750.20:FF:000005">
    <property type="entry name" value="Suppressor of cytokine signaling 1"/>
    <property type="match status" value="1"/>
</dbReference>
<dbReference type="FunFam" id="3.30.505.10:FF:000054">
    <property type="entry name" value="Suppressor of cytokine signaling 1"/>
    <property type="match status" value="1"/>
</dbReference>
<dbReference type="Gene3D" id="3.30.505.10">
    <property type="entry name" value="SH2 domain"/>
    <property type="match status" value="1"/>
</dbReference>
<dbReference type="Gene3D" id="1.10.750.20">
    <property type="entry name" value="SOCS box"/>
    <property type="match status" value="1"/>
</dbReference>
<dbReference type="InterPro" id="IPR000980">
    <property type="entry name" value="SH2"/>
</dbReference>
<dbReference type="InterPro" id="IPR036860">
    <property type="entry name" value="SH2_dom_sf"/>
</dbReference>
<dbReference type="InterPro" id="IPR035861">
    <property type="entry name" value="SOCS1_SH2"/>
</dbReference>
<dbReference type="InterPro" id="IPR001496">
    <property type="entry name" value="SOCS_box"/>
</dbReference>
<dbReference type="InterPro" id="IPR036036">
    <property type="entry name" value="SOCS_box-like_dom_sf"/>
</dbReference>
<dbReference type="PANTHER" id="PTHR10155">
    <property type="entry name" value="PHOSPHATIDYLINOSITOL 3-KINASE REGULATORY SUBUNIT"/>
    <property type="match status" value="1"/>
</dbReference>
<dbReference type="PANTHER" id="PTHR10155:SF4">
    <property type="entry name" value="SUPPRESSOR OF CYTOKINE SIGNALING 1"/>
    <property type="match status" value="1"/>
</dbReference>
<dbReference type="Pfam" id="PF00017">
    <property type="entry name" value="SH2"/>
    <property type="match status" value="1"/>
</dbReference>
<dbReference type="Pfam" id="PF07525">
    <property type="entry name" value="SOCS_box"/>
    <property type="match status" value="1"/>
</dbReference>
<dbReference type="SMART" id="SM00252">
    <property type="entry name" value="SH2"/>
    <property type="match status" value="1"/>
</dbReference>
<dbReference type="SMART" id="SM00253">
    <property type="entry name" value="SOCS"/>
    <property type="match status" value="1"/>
</dbReference>
<dbReference type="SMART" id="SM00969">
    <property type="entry name" value="SOCS_box"/>
    <property type="match status" value="1"/>
</dbReference>
<dbReference type="SUPFAM" id="SSF55550">
    <property type="entry name" value="SH2 domain"/>
    <property type="match status" value="1"/>
</dbReference>
<dbReference type="SUPFAM" id="SSF158235">
    <property type="entry name" value="SOCS box-like"/>
    <property type="match status" value="1"/>
</dbReference>
<dbReference type="PROSITE" id="PS50001">
    <property type="entry name" value="SH2"/>
    <property type="match status" value="1"/>
</dbReference>
<dbReference type="PROSITE" id="PS50225">
    <property type="entry name" value="SOCS"/>
    <property type="match status" value="1"/>
</dbReference>
<comment type="function">
    <text evidence="1 6 10 11 13">Essential negative regulator of type I and type II interferon (IFN) signaling, as well as that of other cytokines, including IL2, IL4, IL6 and leukemia inhibitory factor (LIF) (PubMed:10064597, PubMed:15169905, PubMed:15522878, PubMed:9202125). Downregulates cytokine signaling by inhibiting the JAK/STAT signaling pathway. Acts by binding to JAK proteins and to IFNGR1 and inhibiting their kinase activity (PubMed:10064597, PubMed:15522878, PubMed:9202125). In vitro, suppresses Tec protein-tyrosine activity (By similarity). Regulates IFN-gamma (IFNG)-mediated sensory neuron survival. Probable substrate recognition component of an ECS (Elongin BC-CUL2/5-SOCS-box protein) E3 ubiquitin ligase complex which mediates the ubiquitination and subsequent proteasomal degradation of target proteins (By similarity).</text>
</comment>
<comment type="pathway">
    <text>Protein modification; protein ubiquitination.</text>
</comment>
<comment type="subunit">
    <text evidence="1 5 8 10 15">Interacts with multiple activated proteins of the tyrosine kinase signaling pathway including JAK family kinases, TEC, KIT, GRB2 and VAV. Binding to JAKs is mediated through the KIR and SH2 domain to a phosphorylated tyrosine residue within the JAK JH1 domain. Binds the SH3 domain of GRB2 via diproline determinants in the N-terminus, and the N-terminal regulatory domain of VAV. Interacts with the Elongin BC complex (ELOB and ELOC). Component of an ECS CBC(SOCS1) E3 ubiquitin-protein ligase complex which contains Elongin BC, CUL5, RBX1 and SOCS1. Interacts (via SH2 domain and SOCS box) with TRIM8. Interacts with CUL2. Interacts with AXL and FGFR3 (By similarity). Interacts with INSR. Interacts with TRIM8 (By similarity). Interacts with DCUN1D1 (By similarity). Interacts with IFNGR1 (PubMed:15522878).</text>
</comment>
<comment type="subcellular location">
    <subcellularLocation>
        <location evidence="1">Nucleus</location>
    </subcellularLocation>
    <subcellularLocation>
        <location evidence="1">Cytoplasmic vesicle</location>
    </subcellularLocation>
    <text evidence="1">Detected in perinuclear cytoplasmic vesicles upon interaction with FGFR3.</text>
</comment>
<comment type="tissue specificity">
    <text evidence="9 13">High expression in thymus. Lower expression in lung and spleen (PubMed:9202125). Expressed in both Th1 and Th2 cells.</text>
</comment>
<comment type="developmental stage">
    <text>In the developing brain, expressed at low levels from 10 dpc stages to young adulthood (P25) with peak levels from 14 dpc to P8. In the cortex, expression first observed at 14 dpc uniformly in all cells. Also expressed in the innermost layers of the developing retina. Levels of expression remain unchanged from P8 until adulthood. In the peripheral nervous system, high levels found in virtually all neurons of the dorsal root ganglion.</text>
</comment>
<comment type="induction">
    <text>By a subset of cytokines including those belonging to the interferon, interleukin and colony-stimulating factor families.</text>
</comment>
<comment type="domain">
    <text>The ESS and SH2 domains are required for JAK phosphotyrosine binding. Further interaction with the KIR domain is necessary for signal and kinase inhibition.</text>
</comment>
<comment type="domain">
    <text>The SOCS box domain mediates the interaction with the Elongin BC complex, an adapter module in different E3 ubiquitin ligase complexes. The Elongin BC complex binding domain is also known as BC-box with the consensus [APST]-L-x(3)-C-x(3)-[AILV] and is part of the SOCS box.</text>
</comment>
<comment type="disruption phenotype">
    <text evidence="12 14">Mice exhibit lymphocyte deficiency and degeneration of the liver parenchyma. Animals die within 3 weeks of age. Mutants show a much higher frequency of CD8 single positive thymocytes (PubMed:24880459).</text>
</comment>
<comment type="similarity">
    <text evidence="17">Belongs to the SOCS1 family.</text>
</comment>
<reference key="1">
    <citation type="journal article" date="1997" name="Nature">
        <title>A family of cytokine-inducible inhibitors of signaling.</title>
        <authorList>
            <person name="Starr R."/>
            <person name="Willson T.A."/>
            <person name="Viney E.M."/>
            <person name="Murray L.J.L."/>
            <person name="Rayner J.R."/>
            <person name="Jenkins B.J."/>
            <person name="Gonda T.J."/>
            <person name="Alexander W.S."/>
            <person name="Metcalf D."/>
            <person name="Nicola N.A."/>
            <person name="Hilton D.J."/>
        </authorList>
    </citation>
    <scope>NUCLEOTIDE SEQUENCE [MRNA]</scope>
    <scope>FUNCTION</scope>
    <scope>TISSUE SPECIFICITY</scope>
    <source>
        <tissue>Thymus</tissue>
    </source>
</reference>
<reference key="2">
    <citation type="journal article" date="1997" name="Nature">
        <title>A new protein containing an SH2 domain that inhibits JAK kinases.</title>
        <authorList>
            <person name="Endo T.A."/>
            <person name="Masuhara M."/>
            <person name="Yokouchi M."/>
            <person name="Suzuki R."/>
            <person name="Sakamoto H."/>
            <person name="Mitsui K."/>
            <person name="Matsumoto A."/>
            <person name="Tanimura S."/>
            <person name="Ohtsubo M."/>
            <person name="Misawa H."/>
            <person name="Miyazaki T."/>
            <person name="Leonor N."/>
            <person name="Taniguchi T."/>
            <person name="Fujita T."/>
            <person name="Kanakura Y."/>
            <person name="Komiya S."/>
            <person name="Yoshimura A."/>
        </authorList>
    </citation>
    <scope>NUCLEOTIDE SEQUENCE [MRNA]</scope>
</reference>
<reference key="3">
    <citation type="journal article" date="1997" name="Nature">
        <title>Structure and function of a new STAT-induced STAT inhibitor.</title>
        <authorList>
            <person name="Naka T."/>
            <person name="Narazaki M."/>
            <person name="Hirata M."/>
            <person name="Matsumoto T."/>
            <person name="Minamoto S."/>
            <person name="Aono A."/>
            <person name="Nishimoto N."/>
            <person name="Kajita T."/>
            <person name="Taga T."/>
            <person name="Yoshizaki K."/>
            <person name="Akira S."/>
            <person name="Kishimoto T."/>
        </authorList>
    </citation>
    <scope>NUCLEOTIDE SEQUENCE [MRNA]</scope>
    <source>
        <tissue>Thymus</tissue>
    </source>
</reference>
<reference key="4">
    <citation type="journal article" date="1999" name="EMBO J.">
        <title>SOCS-1 binds to multiple signaling proteins and suppresses Steel factor-dependent proliferation.</title>
        <authorList>
            <person name="De Sepulveda P."/>
            <person name="Okkenhaug K."/>
            <person name="La Rose J."/>
            <person name="Hawley R.G."/>
            <person name="Dubreuil P."/>
            <person name="Rottapel R."/>
        </authorList>
    </citation>
    <scope>NUCLEOTIDE SEQUENCE [MRNA]</scope>
    <source>
        <tissue>Hematopoietic</tissue>
    </source>
</reference>
<reference key="5">
    <citation type="journal article" date="2000" name="J. Biol. Chem.">
        <title>Regulation of SOCS-1 expression by translational repression.</title>
        <authorList>
            <person name="Gregorieff A."/>
            <person name="Pyronnet S."/>
            <person name="Sonenberg N."/>
            <person name="Veillette A."/>
        </authorList>
    </citation>
    <scope>NUCLEOTIDE SEQUENCE [MRNA]</scope>
</reference>
<reference key="6">
    <citation type="journal article" date="2005" name="Science">
        <title>The transcriptional landscape of the mammalian genome.</title>
        <authorList>
            <person name="Carninci P."/>
            <person name="Kasukawa T."/>
            <person name="Katayama S."/>
            <person name="Gough J."/>
            <person name="Frith M.C."/>
            <person name="Maeda N."/>
            <person name="Oyama R."/>
            <person name="Ravasi T."/>
            <person name="Lenhard B."/>
            <person name="Wells C."/>
            <person name="Kodzius R."/>
            <person name="Shimokawa K."/>
            <person name="Bajic V.B."/>
            <person name="Brenner S.E."/>
            <person name="Batalov S."/>
            <person name="Forrest A.R."/>
            <person name="Zavolan M."/>
            <person name="Davis M.J."/>
            <person name="Wilming L.G."/>
            <person name="Aidinis V."/>
            <person name="Allen J.E."/>
            <person name="Ambesi-Impiombato A."/>
            <person name="Apweiler R."/>
            <person name="Aturaliya R.N."/>
            <person name="Bailey T.L."/>
            <person name="Bansal M."/>
            <person name="Baxter L."/>
            <person name="Beisel K.W."/>
            <person name="Bersano T."/>
            <person name="Bono H."/>
            <person name="Chalk A.M."/>
            <person name="Chiu K.P."/>
            <person name="Choudhary V."/>
            <person name="Christoffels A."/>
            <person name="Clutterbuck D.R."/>
            <person name="Crowe M.L."/>
            <person name="Dalla E."/>
            <person name="Dalrymple B.P."/>
            <person name="de Bono B."/>
            <person name="Della Gatta G."/>
            <person name="di Bernardo D."/>
            <person name="Down T."/>
            <person name="Engstrom P."/>
            <person name="Fagiolini M."/>
            <person name="Faulkner G."/>
            <person name="Fletcher C.F."/>
            <person name="Fukushima T."/>
            <person name="Furuno M."/>
            <person name="Futaki S."/>
            <person name="Gariboldi M."/>
            <person name="Georgii-Hemming P."/>
            <person name="Gingeras T.R."/>
            <person name="Gojobori T."/>
            <person name="Green R.E."/>
            <person name="Gustincich S."/>
            <person name="Harbers M."/>
            <person name="Hayashi Y."/>
            <person name="Hensch T.K."/>
            <person name="Hirokawa N."/>
            <person name="Hill D."/>
            <person name="Huminiecki L."/>
            <person name="Iacono M."/>
            <person name="Ikeo K."/>
            <person name="Iwama A."/>
            <person name="Ishikawa T."/>
            <person name="Jakt M."/>
            <person name="Kanapin A."/>
            <person name="Katoh M."/>
            <person name="Kawasawa Y."/>
            <person name="Kelso J."/>
            <person name="Kitamura H."/>
            <person name="Kitano H."/>
            <person name="Kollias G."/>
            <person name="Krishnan S.P."/>
            <person name="Kruger A."/>
            <person name="Kummerfeld S.K."/>
            <person name="Kurochkin I.V."/>
            <person name="Lareau L.F."/>
            <person name="Lazarevic D."/>
            <person name="Lipovich L."/>
            <person name="Liu J."/>
            <person name="Liuni S."/>
            <person name="McWilliam S."/>
            <person name="Madan Babu M."/>
            <person name="Madera M."/>
            <person name="Marchionni L."/>
            <person name="Matsuda H."/>
            <person name="Matsuzawa S."/>
            <person name="Miki H."/>
            <person name="Mignone F."/>
            <person name="Miyake S."/>
            <person name="Morris K."/>
            <person name="Mottagui-Tabar S."/>
            <person name="Mulder N."/>
            <person name="Nakano N."/>
            <person name="Nakauchi H."/>
            <person name="Ng P."/>
            <person name="Nilsson R."/>
            <person name="Nishiguchi S."/>
            <person name="Nishikawa S."/>
            <person name="Nori F."/>
            <person name="Ohara O."/>
            <person name="Okazaki Y."/>
            <person name="Orlando V."/>
            <person name="Pang K.C."/>
            <person name="Pavan W.J."/>
            <person name="Pavesi G."/>
            <person name="Pesole G."/>
            <person name="Petrovsky N."/>
            <person name="Piazza S."/>
            <person name="Reed J."/>
            <person name="Reid J.F."/>
            <person name="Ring B.Z."/>
            <person name="Ringwald M."/>
            <person name="Rost B."/>
            <person name="Ruan Y."/>
            <person name="Salzberg S.L."/>
            <person name="Sandelin A."/>
            <person name="Schneider C."/>
            <person name="Schoenbach C."/>
            <person name="Sekiguchi K."/>
            <person name="Semple C.A."/>
            <person name="Seno S."/>
            <person name="Sessa L."/>
            <person name="Sheng Y."/>
            <person name="Shibata Y."/>
            <person name="Shimada H."/>
            <person name="Shimada K."/>
            <person name="Silva D."/>
            <person name="Sinclair B."/>
            <person name="Sperling S."/>
            <person name="Stupka E."/>
            <person name="Sugiura K."/>
            <person name="Sultana R."/>
            <person name="Takenaka Y."/>
            <person name="Taki K."/>
            <person name="Tammoja K."/>
            <person name="Tan S.L."/>
            <person name="Tang S."/>
            <person name="Taylor M.S."/>
            <person name="Tegner J."/>
            <person name="Teichmann S.A."/>
            <person name="Ueda H.R."/>
            <person name="van Nimwegen E."/>
            <person name="Verardo R."/>
            <person name="Wei C.L."/>
            <person name="Yagi K."/>
            <person name="Yamanishi H."/>
            <person name="Zabarovsky E."/>
            <person name="Zhu S."/>
            <person name="Zimmer A."/>
            <person name="Hide W."/>
            <person name="Bult C."/>
            <person name="Grimmond S.M."/>
            <person name="Teasdale R.D."/>
            <person name="Liu E.T."/>
            <person name="Brusic V."/>
            <person name="Quackenbush J."/>
            <person name="Wahlestedt C."/>
            <person name="Mattick J.S."/>
            <person name="Hume D.A."/>
            <person name="Kai C."/>
            <person name="Sasaki D."/>
            <person name="Tomaru Y."/>
            <person name="Fukuda S."/>
            <person name="Kanamori-Katayama M."/>
            <person name="Suzuki M."/>
            <person name="Aoki J."/>
            <person name="Arakawa T."/>
            <person name="Iida J."/>
            <person name="Imamura K."/>
            <person name="Itoh M."/>
            <person name="Kato T."/>
            <person name="Kawaji H."/>
            <person name="Kawagashira N."/>
            <person name="Kawashima T."/>
            <person name="Kojima M."/>
            <person name="Kondo S."/>
            <person name="Konno H."/>
            <person name="Nakano K."/>
            <person name="Ninomiya N."/>
            <person name="Nishio T."/>
            <person name="Okada M."/>
            <person name="Plessy C."/>
            <person name="Shibata K."/>
            <person name="Shiraki T."/>
            <person name="Suzuki S."/>
            <person name="Tagami M."/>
            <person name="Waki K."/>
            <person name="Watahiki A."/>
            <person name="Okamura-Oho Y."/>
            <person name="Suzuki H."/>
            <person name="Kawai J."/>
            <person name="Hayashizaki Y."/>
        </authorList>
    </citation>
    <scope>NUCLEOTIDE SEQUENCE [LARGE SCALE MRNA]</scope>
    <source>
        <strain>C57BL/6J</strain>
        <strain>NOD</strain>
        <tissue>Skin</tissue>
    </source>
</reference>
<reference key="7">
    <citation type="journal article" date="2004" name="Genome Res.">
        <title>The status, quality, and expansion of the NIH full-length cDNA project: the Mammalian Gene Collection (MGC).</title>
        <authorList>
            <consortium name="The MGC Project Team"/>
        </authorList>
    </citation>
    <scope>NUCLEOTIDE SEQUENCE [LARGE SCALE MRNA]</scope>
    <source>
        <tissue>Lung</tissue>
    </source>
</reference>
<reference key="8">
    <citation type="journal article" date="1998" name="Genes Dev.">
        <title>The Elongin BC complex interacts with the conserved SOCS-box motif present in members of the SOCS, ras, WD-40 repeat, and ankyrin repeat families.</title>
        <authorList>
            <person name="Kamura T."/>
            <person name="Sato S."/>
            <person name="Haque D."/>
            <person name="Liu L."/>
            <person name="Kaelin W.G. Jr."/>
            <person name="Conaway R.C."/>
            <person name="Conaway J.W."/>
        </authorList>
    </citation>
    <scope>INTERACTION WITH ELONGIN BC COMPLEX</scope>
    <scope>MUTAGENESIS OF LEU-175 AND CYS-179</scope>
</reference>
<reference key="9">
    <citation type="journal article" date="1999" name="Proc. Natl. Acad. Sci. U.S.A.">
        <title>The conserved SOCS box motif in suppressors of cytokine signaling binds to elongins B and C and may couple bound proteins to proteasomal degradation.</title>
        <authorList>
            <person name="Zhang J.-G."/>
            <person name="Farley A."/>
            <person name="Nicholson S.E."/>
            <person name="Willson T.A."/>
            <person name="Zugaro L.M."/>
            <person name="Simpson R.J."/>
            <person name="Moritz R.L."/>
            <person name="Cary D."/>
            <person name="Richardson R."/>
            <person name="Hausmann G."/>
            <person name="Kile B.J."/>
            <person name="Kent S.B.H."/>
            <person name="Alexander W.S."/>
            <person name="Metcalf D."/>
            <person name="Hilton D.J."/>
            <person name="Nicola N.A."/>
            <person name="Baca M."/>
        </authorList>
    </citation>
    <scope>INTERACTION WITH ELONGIN BC COMPLEX</scope>
</reference>
<reference key="10">
    <citation type="journal article" date="2002" name="J. Biol. Chem.">
        <title>TRIM8/GERP RING finger protein interacts with SOCS-1.</title>
        <authorList>
            <person name="Toniato E."/>
            <person name="Chen X.P."/>
            <person name="Losman J."/>
            <person name="Flati V."/>
            <person name="Donahue L."/>
            <person name="Rothman P."/>
        </authorList>
    </citation>
    <scope>INTERACTION WITH TRIM8</scope>
</reference>
<reference key="11">
    <citation type="journal article" date="1998" name="Proc. Natl. Acad. Sci. U.S.A.">
        <title>Three distinct domains of SSI-1/SOCS-1/JAB protein are required for its suppression of interleukin 6 signaling.</title>
        <authorList>
            <person name="Narazaki M."/>
            <person name="Fujimoto M."/>
            <person name="Matsumoto T."/>
            <person name="Morita Y."/>
            <person name="Saito H."/>
            <person name="Kajita T."/>
            <person name="Yoshizaki K."/>
            <person name="Naka T."/>
            <person name="Kishimoto T."/>
        </authorList>
    </citation>
    <scope>MUTAGENESIS</scope>
</reference>
<reference key="12">
    <citation type="journal article" date="1998" name="Proc. Natl. Acad. Sci. U.S.A.">
        <title>Liver degeneration and lymphoid deficiencies in mice lacking suppressor of cytokine signaling-1.</title>
        <authorList>
            <person name="Starr R."/>
            <person name="Metcalf D."/>
            <person name="Elefanty A.G."/>
            <person name="Brysha M."/>
            <person name="Willson T.A."/>
            <person name="Nicola N.A."/>
            <person name="Hilton D.J."/>
            <person name="Alexander W.S."/>
        </authorList>
    </citation>
    <scope>DISRUPTION PHENOTYPE</scope>
</reference>
<reference key="13">
    <citation type="journal article" date="1999" name="EMBO J.">
        <title>Mutational analyses of the SOCS proteins suggest a dual domain requirement but distinct mechanisms for inhibition of LIF and IL-6 signal transduction.</title>
        <authorList>
            <person name="Nicholson S.E."/>
            <person name="Willson T.A."/>
            <person name="Farley A."/>
            <person name="Starr R."/>
            <person name="Zhang J.-G."/>
            <person name="Baca M."/>
            <person name="Alexander W.S."/>
            <person name="Metcalf D."/>
            <person name="Hilton D.J."/>
            <person name="Nicola N.A."/>
        </authorList>
    </citation>
    <scope>MUTAGENESIS</scope>
</reference>
<reference key="14">
    <citation type="journal article" date="1999" name="EMBO J.">
        <title>The JAK-binding protein JAB inhibits Janus tyrosine kinase activity through binding in the activation loop.</title>
        <authorList>
            <person name="Yasukawa H."/>
            <person name="Misawa H."/>
            <person name="Sakamoto H."/>
            <person name="Masuhara M."/>
            <person name="Sasaki A."/>
            <person name="Wakioka T."/>
            <person name="Ohtsuka S."/>
            <person name="Imaizumi T."/>
            <person name="Matsuda T."/>
            <person name="Ihle J.N."/>
            <person name="Yoshimura A."/>
        </authorList>
    </citation>
    <scope>FUNCTION IN INHIBITION OF JAK2 KINASE ACTIVITY</scope>
    <scope>MUTAGENESIS OF HIS-55; PHE-56; ARG-57; THR-58; PHE-59; ARG-60; SER-61; HIS-62; ASP-64; TYR-65 AND ARG-105</scope>
</reference>
<reference key="15">
    <citation type="journal article" date="2001" name="J. Biol. Chem.">
        <title>A mutant form of JAB/SOCS1 augments the cytokine-induced JAK/STAT pathway by accelerating degradation of wild-type JAB/CIS family proteins through the SOCS-box.</title>
        <authorList>
            <person name="Hanada T."/>
            <person name="Yoshida T."/>
            <person name="Kinjyo I."/>
            <person name="Minoguchi S."/>
            <person name="Yasukawa H."/>
            <person name="Kato S."/>
            <person name="Mimata H."/>
            <person name="Nomura Y."/>
            <person name="Seki Y."/>
            <person name="Kubo M."/>
            <person name="Yoshimura A."/>
        </authorList>
    </citation>
    <scope>MUTAGENESIS OF PHE-59</scope>
</reference>
<reference key="16">
    <citation type="journal article" date="2002" name="Proc. Natl. Acad. Sci. U.S.A.">
        <title>Expression of the suppressor of cytokine signaling-5 (SOCS5) negatively regulates IL-4-dependent STAT6 activation and Th2 differentiation.</title>
        <authorList>
            <person name="Seki Y."/>
            <person name="Hayashi K."/>
            <person name="Matsumoto A."/>
            <person name="Seki N."/>
            <person name="Tsukada J."/>
            <person name="Ransom J."/>
            <person name="Naka T."/>
            <person name="Kishimoto T."/>
            <person name="Yoshimura A."/>
            <person name="Kubo M."/>
        </authorList>
    </citation>
    <scope>TISSUE SPECIFICITY</scope>
</reference>
<reference key="17">
    <citation type="journal article" date="2004" name="Mol. Cell. Biol.">
        <title>Suppressor of cytokine signaling 1 (SOCS-1) and SOCS-3 cause insulin resistance through inhibition of tyrosine phosphorylation of insulin receptor substrate proteins by discrete mechanisms.</title>
        <authorList>
            <person name="Ueki K."/>
            <person name="Kondo T."/>
            <person name="Kahn C.R."/>
        </authorList>
    </citation>
    <scope>FUNCTION IN INHIBITION OF INSR KINASE ACTIVITY</scope>
    <scope>INTERACTION WITH INSR</scope>
</reference>
<reference key="18">
    <citation type="journal article" date="2005" name="J. Biol. Chem.">
        <title>Role of tyrosine 441 of interferon-gamma receptor subunit 1 in SOCS-1-mediated attenuation of STAT1 activation.</title>
        <authorList>
            <person name="Qing Y."/>
            <person name="Costa-Pereira A.P."/>
            <person name="Watling D."/>
            <person name="Stark G.R."/>
        </authorList>
    </citation>
    <scope>FUNCTION</scope>
    <scope>INTERACTION WITH IFNGR1</scope>
</reference>
<reference key="19">
    <citation type="journal article" date="2014" name="Nat. Immunol.">
        <title>The transcription factor ThPOK suppresses Runx3 and imposes CD4(+) lineage fate by inducing the SOCS suppressors of cytokine signaling.</title>
        <authorList>
            <person name="Luckey M.A."/>
            <person name="Kimura M.Y."/>
            <person name="Waickman A.T."/>
            <person name="Feigenbaum L."/>
            <person name="Singer A."/>
            <person name="Park J.H."/>
        </authorList>
    </citation>
    <scope>FUNCTION</scope>
    <scope>DISRUPTION PHENOTYPE</scope>
</reference>